<organismHost>
    <name type="scientific">Homo sapiens</name>
    <name type="common">Human</name>
    <dbReference type="NCBI Taxonomy" id="9606"/>
</organismHost>
<gene>
    <name type="ORF">U100</name>
</gene>
<reference key="1">
    <citation type="journal article" date="1999" name="J. Virol.">
        <title>Human herpesvirus 6B genome sequence: coding content and comparison with human herpesvirus 6A.</title>
        <authorList>
            <person name="Dominguez G."/>
            <person name="Dambaugh T.R."/>
            <person name="Stamey F.R."/>
            <person name="Dewhurst S."/>
            <person name="Inoue N."/>
            <person name="Pellett P.E."/>
        </authorList>
    </citation>
    <scope>NUCLEOTIDE SEQUENCE [LARGE SCALE GENOMIC DNA]</scope>
</reference>
<reference key="2">
    <citation type="journal article" date="2011" name="J. Virol.">
        <title>Analysis of a neutralizing antibody for human herpesvirus 6B reveals a role for glycoprotein Q1 in viral entry.</title>
        <authorList>
            <person name="Kawabata A."/>
            <person name="Oyaizu H."/>
            <person name="Maeki T."/>
            <person name="Tang H."/>
            <person name="Yamanishi K."/>
            <person name="Mori Y."/>
        </authorList>
    </citation>
    <scope>FUNCTION</scope>
</reference>
<reference key="3">
    <citation type="journal article" date="2013" name="Proc. Natl. Acad. Sci. U.S.A.">
        <title>CD134 is a cellular receptor specific for human herpesvirus-6B entry.</title>
        <authorList>
            <person name="Tang H."/>
            <person name="Serada S."/>
            <person name="Kawabata A."/>
            <person name="Ota M."/>
            <person name="Hayashi E."/>
            <person name="Naka T."/>
            <person name="Yamanishi K."/>
            <person name="Mori Y."/>
        </authorList>
    </citation>
    <scope>INTERACTION WITH HOST TNFRSF4</scope>
</reference>
<protein>
    <recommendedName>
        <fullName>Glycoprotein Q1</fullName>
        <shortName>gQ1</shortName>
    </recommendedName>
    <alternativeName>
        <fullName>Glycoprotein 105</fullName>
        <shortName>gp105</shortName>
    </alternativeName>
    <alternativeName>
        <fullName>Glycoprotein Q-80k</fullName>
        <shortName>gQ-80k</shortName>
    </alternativeName>
    <alternativeName>
        <fullName>HCLF1 protein</fullName>
    </alternativeName>
</protein>
<organism>
    <name type="scientific">Human herpesvirus 6B (strain Z29)</name>
    <name type="common">HHV-6 variant B</name>
    <name type="synonym">Human B lymphotropic virus</name>
    <dbReference type="NCBI Taxonomy" id="36351"/>
    <lineage>
        <taxon>Viruses</taxon>
        <taxon>Duplodnaviria</taxon>
        <taxon>Heunggongvirae</taxon>
        <taxon>Peploviricota</taxon>
        <taxon>Herviviricetes</taxon>
        <taxon>Herpesvirales</taxon>
        <taxon>Orthoherpesviridae</taxon>
        <taxon>Betaherpesvirinae</taxon>
        <taxon>Roseolovirus</taxon>
        <taxon>Roseolovirus humanbeta6b</taxon>
        <taxon>Human herpesvirus 6B</taxon>
    </lineage>
</organism>
<proteinExistence type="evidence at protein level"/>
<keyword id="KW-0025">Alternative splicing</keyword>
<keyword id="KW-0325">Glycoprotein</keyword>
<keyword id="KW-1038">Host endoplasmic reticulum</keyword>
<keyword id="KW-0945">Host-virus interaction</keyword>
<keyword id="KW-0426">Late protein</keyword>
<keyword id="KW-1185">Reference proteome</keyword>
<keyword id="KW-0732">Signal</keyword>
<keyword id="KW-1161">Viral attachment to host cell</keyword>
<keyword id="KW-1234">Viral attachment to host entry receptor</keyword>
<keyword id="KW-0261">Viral envelope protein</keyword>
<keyword id="KW-0946">Virion</keyword>
<keyword id="KW-1160">Virus entry into host cell</keyword>
<accession>Q9QJ11</accession>
<dbReference type="EMBL" id="AF157706">
    <property type="protein sequence ID" value="AAD49680.1"/>
    <property type="molecule type" value="Genomic_DNA"/>
</dbReference>
<dbReference type="RefSeq" id="NP_050271.1">
    <property type="nucleotide sequence ID" value="NC_000898.1"/>
</dbReference>
<dbReference type="ABCD" id="Q9QJ11">
    <property type="antibodies" value="1 sequenced antibody"/>
</dbReference>
<dbReference type="GeneID" id="1497092"/>
<dbReference type="KEGG" id="vg:1497092"/>
<dbReference type="Proteomes" id="UP000006930">
    <property type="component" value="Segment"/>
</dbReference>
<dbReference type="GO" id="GO:0044166">
    <property type="term" value="C:host cell endoplasmic reticulum lumen"/>
    <property type="evidence" value="ECO:0007669"/>
    <property type="project" value="UniProtKB-SubCell"/>
</dbReference>
<dbReference type="GO" id="GO:0019031">
    <property type="term" value="C:viral envelope"/>
    <property type="evidence" value="ECO:0007669"/>
    <property type="project" value="UniProtKB-KW"/>
</dbReference>
<dbReference type="GO" id="GO:0098670">
    <property type="term" value="P:entry receptor-mediated virion attachment to host cell"/>
    <property type="evidence" value="ECO:0007669"/>
    <property type="project" value="UniProtKB-KW"/>
</dbReference>
<dbReference type="GO" id="GO:0046718">
    <property type="term" value="P:symbiont entry into host cell"/>
    <property type="evidence" value="ECO:0007669"/>
    <property type="project" value="UniProtKB-KW"/>
</dbReference>
<comment type="function">
    <text evidence="1">Plays a role in virus entry by participating in host receptor binding at the cell surface.</text>
</comment>
<comment type="subunit">
    <text evidence="1 4">Interacts with isoform gQ2 (By similarity). The heterodimer gQ1-gQ2 associates with the glycoprotein complex gH-gL to form a tetrameric complex (By similarity). The gH/gL/gQ1/gQ2 complex binds to host TNFRSF4.</text>
</comment>
<comment type="subcellular location">
    <subcellularLocation>
        <location evidence="1">Virion</location>
    </subcellularLocation>
    <subcellularLocation>
        <location evidence="1">Host endoplasmic reticulum lumen</location>
    </subcellularLocation>
</comment>
<comment type="alternative products">
    <event type="alternative splicing"/>
    <isoform>
        <id>Q9QJ11-1</id>
        <name>Glycoprotein Q1</name>
        <sequence type="displayed"/>
    </isoform>
    <isoform>
        <id>P0DOE1-1</id>
        <name>Glycoprotein Q2</name>
        <sequence type="external"/>
    </isoform>
    <isoform>
        <id>P0DOE1-2</id>
        <name>Glycoprotein Q0</name>
        <sequence type="external"/>
    </isoform>
</comment>
<comment type="PTM">
    <text evidence="1">Glycosylated by host.</text>
</comment>
<feature type="signal peptide" evidence="2">
    <location>
        <begin position="1"/>
        <end position="24"/>
    </location>
</feature>
<feature type="chain" id="PRO_0000408406" description="Glycoprotein Q1">
    <location>
        <begin position="25"/>
        <end position="616"/>
    </location>
</feature>
<feature type="glycosylation site" description="N-linked (GlcNAc...) asparagine; by host" evidence="3">
    <location>
        <position position="23"/>
    </location>
</feature>
<feature type="glycosylation site" description="N-linked (GlcNAc...) asparagine; by host" evidence="3">
    <location>
        <position position="44"/>
    </location>
</feature>
<feature type="glycosylation site" description="N-linked (GlcNAc...) asparagine; by host" evidence="3">
    <location>
        <position position="282"/>
    </location>
</feature>
<feature type="glycosylation site" description="N-linked (GlcNAc...) asparagine; by host" evidence="3">
    <location>
        <position position="330"/>
    </location>
</feature>
<feature type="glycosylation site" description="N-linked (GlcNAc...) asparagine; by host" evidence="3">
    <location>
        <position position="351"/>
    </location>
</feature>
<sequence length="616" mass="70024">MRPPRRSAPILVCAISMATALSNATVHRDAGTVESTPPPDDEDNYTAKYYDDSIYFNIYDGTNPTPRRRTLPEIISKFSTSEMSRLGGLKAFVPVDYTPTTTLEDIEDLLNYAICDDNSCGCLIETEARIMFGDIIICVPLSAESRGVRNLKSRIMPMGLSQILSSGLGLHFSLLYGAFGSNYNSLAYMERLKPLTAMTAIAFCPMTSKLELRQNYRLEKARCELIVNIELLKIQNHGGQTIKTLTSFAIVRKDSDGQDWETCTRFASVSIEDILRSKPAANGTCCPPRDVHHDRPTLQSSNSWTRTEYFEPWQDVVDAYVPINDNHCPNDSYVVFQTLQGHEWCSRLNKNDTKNYLSSVLAFKNALYETEELMETIGMRLASQILSLVGQRGTSIRNIDPAIVSALWHSLPEKLTTTNIKYDIASPTHMSPALCTIFIQTGTSKQRFRNAGLLMVNNIFTVQARYSKQNMFEKKIYGYEHLGQALCEDGEILFQNAGQKFCRPFTDNRTIVYTMQDQVQRPWSVTWMDFNLVISDYGRAVIENLTESAMSAHKNGPRYLQMETFISDLFRYECHRDNRYVLEKKLQMFYPTTHMNELLFYPSDPTLPSPYGNGHY</sequence>
<name>GQ1_HHV6Z</name>
<evidence type="ECO:0000250" key="1">
    <source>
        <dbReference type="UniProtKB" id="Q69572"/>
    </source>
</evidence>
<evidence type="ECO:0000255" key="2"/>
<evidence type="ECO:0000255" key="3">
    <source>
        <dbReference type="PROSITE-ProRule" id="PRU00498"/>
    </source>
</evidence>
<evidence type="ECO:0000269" key="4">
    <source>
    </source>
</evidence>